<keyword id="KW-0002">3D-structure</keyword>
<keyword id="KW-1185">Reference proteome</keyword>
<keyword id="KW-0687">Ribonucleoprotein</keyword>
<keyword id="KW-0689">Ribosomal protein</keyword>
<comment type="similarity">
    <text evidence="1">Belongs to the bacterial ribosomal protein bL34 family.</text>
</comment>
<sequence length="51" mass="6201">MKRTYQPSRVKRNRKFGFRARMKTKGGRLILSRRRAKGRMKLTVSDEKKKY</sequence>
<name>RL34_BORBU</name>
<organism>
    <name type="scientific">Borreliella burgdorferi (strain ATCC 35210 / DSM 4680 / CIP 102532 / B31)</name>
    <name type="common">Borrelia burgdorferi</name>
    <dbReference type="NCBI Taxonomy" id="224326"/>
    <lineage>
        <taxon>Bacteria</taxon>
        <taxon>Pseudomonadati</taxon>
        <taxon>Spirochaetota</taxon>
        <taxon>Spirochaetia</taxon>
        <taxon>Spirochaetales</taxon>
        <taxon>Borreliaceae</taxon>
        <taxon>Borreliella</taxon>
    </lineage>
</organism>
<dbReference type="EMBL" id="U04527">
    <property type="protein sequence ID" value="AAA58944.1"/>
    <property type="molecule type" value="Genomic_DNA"/>
</dbReference>
<dbReference type="EMBL" id="AE000783">
    <property type="protein sequence ID" value="AAB91512.1"/>
    <property type="molecule type" value="Genomic_DNA"/>
</dbReference>
<dbReference type="PIR" id="G70154">
    <property type="entry name" value="G70154"/>
</dbReference>
<dbReference type="RefSeq" id="NP_212574.1">
    <property type="nucleotide sequence ID" value="NC_001318.1"/>
</dbReference>
<dbReference type="RefSeq" id="WP_002557032.1">
    <property type="nucleotide sequence ID" value="NC_001318.1"/>
</dbReference>
<dbReference type="PDB" id="8FMW">
    <property type="method" value="EM"/>
    <property type="resolution" value="2.86 A"/>
    <property type="chains" value="Af=1-50"/>
</dbReference>
<dbReference type="PDB" id="8FN2">
    <property type="method" value="EM"/>
    <property type="resolution" value="3.40 A"/>
    <property type="chains" value="f=1-50"/>
</dbReference>
<dbReference type="PDBsum" id="8FMW"/>
<dbReference type="PDBsum" id="8FN2"/>
<dbReference type="EMDB" id="EMD-29298"/>
<dbReference type="EMDB" id="EMD-29304"/>
<dbReference type="SMR" id="P29220"/>
<dbReference type="STRING" id="224326.BB_0440"/>
<dbReference type="PaxDb" id="224326-BB_0440"/>
<dbReference type="EnsemblBacteria" id="AAB91512">
    <property type="protein sequence ID" value="AAB91512"/>
    <property type="gene ID" value="BB_0440"/>
</dbReference>
<dbReference type="GeneID" id="56567871"/>
<dbReference type="KEGG" id="bbu:BB_0440"/>
<dbReference type="PATRIC" id="fig|224326.49.peg.831"/>
<dbReference type="HOGENOM" id="CLU_129938_2_0_12"/>
<dbReference type="OrthoDB" id="9804164at2"/>
<dbReference type="Proteomes" id="UP000001807">
    <property type="component" value="Chromosome"/>
</dbReference>
<dbReference type="GO" id="GO:1990904">
    <property type="term" value="C:ribonucleoprotein complex"/>
    <property type="evidence" value="ECO:0007669"/>
    <property type="project" value="UniProtKB-KW"/>
</dbReference>
<dbReference type="GO" id="GO:0005840">
    <property type="term" value="C:ribosome"/>
    <property type="evidence" value="ECO:0007669"/>
    <property type="project" value="UniProtKB-KW"/>
</dbReference>
<dbReference type="GO" id="GO:0003735">
    <property type="term" value="F:structural constituent of ribosome"/>
    <property type="evidence" value="ECO:0007669"/>
    <property type="project" value="InterPro"/>
</dbReference>
<dbReference type="GO" id="GO:0006412">
    <property type="term" value="P:translation"/>
    <property type="evidence" value="ECO:0007669"/>
    <property type="project" value="UniProtKB-UniRule"/>
</dbReference>
<dbReference type="FunFam" id="1.10.287.3980:FF:000001">
    <property type="entry name" value="Mitochondrial ribosomal protein L34"/>
    <property type="match status" value="1"/>
</dbReference>
<dbReference type="Gene3D" id="1.10.287.3980">
    <property type="match status" value="1"/>
</dbReference>
<dbReference type="HAMAP" id="MF_00391">
    <property type="entry name" value="Ribosomal_bL34"/>
    <property type="match status" value="1"/>
</dbReference>
<dbReference type="InterPro" id="IPR000271">
    <property type="entry name" value="Ribosomal_bL34"/>
</dbReference>
<dbReference type="InterPro" id="IPR020939">
    <property type="entry name" value="Ribosomal_bL34_CS"/>
</dbReference>
<dbReference type="NCBIfam" id="TIGR01030">
    <property type="entry name" value="rpmH_bact"/>
    <property type="match status" value="1"/>
</dbReference>
<dbReference type="PANTHER" id="PTHR14503:SF4">
    <property type="entry name" value="LARGE RIBOSOMAL SUBUNIT PROTEIN BL34M"/>
    <property type="match status" value="1"/>
</dbReference>
<dbReference type="PANTHER" id="PTHR14503">
    <property type="entry name" value="MITOCHONDRIAL RIBOSOMAL PROTEIN 34 FAMILY MEMBER"/>
    <property type="match status" value="1"/>
</dbReference>
<dbReference type="Pfam" id="PF00468">
    <property type="entry name" value="Ribosomal_L34"/>
    <property type="match status" value="1"/>
</dbReference>
<dbReference type="PROSITE" id="PS00784">
    <property type="entry name" value="RIBOSOMAL_L34"/>
    <property type="match status" value="1"/>
</dbReference>
<accession>P29220</accession>
<feature type="chain" id="PRO_0000187347" description="Large ribosomal subunit protein bL34">
    <location>
        <begin position="1"/>
        <end position="51"/>
    </location>
</feature>
<feature type="helix" evidence="2">
    <location>
        <begin position="10"/>
        <end position="16"/>
    </location>
</feature>
<feature type="helix" evidence="2">
    <location>
        <begin position="18"/>
        <end position="22"/>
    </location>
</feature>
<feature type="helix" evidence="2">
    <location>
        <begin position="25"/>
        <end position="37"/>
    </location>
</feature>
<feature type="helix" evidence="2">
    <location>
        <begin position="44"/>
        <end position="46"/>
    </location>
</feature>
<gene>
    <name type="primary">rpmH</name>
    <name type="ordered locus">BB_0440</name>
</gene>
<protein>
    <recommendedName>
        <fullName evidence="1">Large ribosomal subunit protein bL34</fullName>
    </recommendedName>
    <alternativeName>
        <fullName>50S ribosomal protein L34</fullName>
    </alternativeName>
</protein>
<evidence type="ECO:0000305" key="1"/>
<evidence type="ECO:0007829" key="2">
    <source>
        <dbReference type="PDB" id="8FN2"/>
    </source>
</evidence>
<reference key="1">
    <citation type="journal article" date="1992" name="Nucleic Acids Res.">
        <title>Nucleotide sequence of the Borrelia burgdorferi rpmH gene encoding ribosomal protein L34.</title>
        <authorList>
            <person name="Old I.G."/>
            <person name="Margarita D."/>
            <person name="Saint-Girons I."/>
        </authorList>
    </citation>
    <scope>NUCLEOTIDE SEQUENCE [GENOMIC DNA]</scope>
    <source>
        <strain>212</strain>
    </source>
</reference>
<reference key="2">
    <citation type="journal article" date="1997" name="Nature">
        <title>Genomic sequence of a Lyme disease spirochaete, Borrelia burgdorferi.</title>
        <authorList>
            <person name="Fraser C.M."/>
            <person name="Casjens S."/>
            <person name="Huang W.M."/>
            <person name="Sutton G.G."/>
            <person name="Clayton R.A."/>
            <person name="Lathigra R."/>
            <person name="White O."/>
            <person name="Ketchum K.A."/>
            <person name="Dodson R.J."/>
            <person name="Hickey E.K."/>
            <person name="Gwinn M.L."/>
            <person name="Dougherty B.A."/>
            <person name="Tomb J.-F."/>
            <person name="Fleischmann R.D."/>
            <person name="Richardson D.L."/>
            <person name="Peterson J.D."/>
            <person name="Kerlavage A.R."/>
            <person name="Quackenbush J."/>
            <person name="Salzberg S.L."/>
            <person name="Hanson M."/>
            <person name="van Vugt R."/>
            <person name="Palmer N."/>
            <person name="Adams M.D."/>
            <person name="Gocayne J.D."/>
            <person name="Weidman J.F."/>
            <person name="Utterback T.R."/>
            <person name="Watthey L."/>
            <person name="McDonald L.A."/>
            <person name="Artiach P."/>
            <person name="Bowman C."/>
            <person name="Garland S.A."/>
            <person name="Fujii C."/>
            <person name="Cotton M.D."/>
            <person name="Horst K."/>
            <person name="Roberts K.M."/>
            <person name="Hatch B."/>
            <person name="Smith H.O."/>
            <person name="Venter J.C."/>
        </authorList>
    </citation>
    <scope>NUCLEOTIDE SEQUENCE [LARGE SCALE GENOMIC DNA]</scope>
    <source>
        <strain>ATCC 35210 / DSM 4680 / CIP 102532 / B31</strain>
    </source>
</reference>
<proteinExistence type="evidence at protein level"/>